<organism>
    <name type="scientific">Blochmanniella pennsylvanica (strain BPEN)</name>
    <dbReference type="NCBI Taxonomy" id="291272"/>
    <lineage>
        <taxon>Bacteria</taxon>
        <taxon>Pseudomonadati</taxon>
        <taxon>Pseudomonadota</taxon>
        <taxon>Gammaproteobacteria</taxon>
        <taxon>Enterobacterales</taxon>
        <taxon>Enterobacteriaceae</taxon>
        <taxon>ant endosymbionts</taxon>
        <taxon>Candidatus Blochmanniella</taxon>
    </lineage>
</organism>
<keyword id="KW-0067">ATP-binding</keyword>
<keyword id="KW-0963">Cytoplasm</keyword>
<keyword id="KW-0436">Ligase</keyword>
<keyword id="KW-0547">Nucleotide-binding</keyword>
<keyword id="KW-1185">Reference proteome</keyword>
<keyword id="KW-0819">tRNA processing</keyword>
<dbReference type="EC" id="6.3.4.19" evidence="1"/>
<dbReference type="EMBL" id="CP000016">
    <property type="protein sequence ID" value="AAZ40927.1"/>
    <property type="molecule type" value="Genomic_DNA"/>
</dbReference>
<dbReference type="RefSeq" id="WP_011282834.1">
    <property type="nucleotide sequence ID" value="NC_007292.1"/>
</dbReference>
<dbReference type="SMR" id="Q493B5"/>
<dbReference type="STRING" id="291272.BPEN_296"/>
<dbReference type="KEGG" id="bpn:BPEN_296"/>
<dbReference type="eggNOG" id="COG0037">
    <property type="taxonomic scope" value="Bacteria"/>
</dbReference>
<dbReference type="HOGENOM" id="CLU_018869_2_0_6"/>
<dbReference type="OrthoDB" id="9807403at2"/>
<dbReference type="Proteomes" id="UP000007794">
    <property type="component" value="Chromosome"/>
</dbReference>
<dbReference type="GO" id="GO:0005737">
    <property type="term" value="C:cytoplasm"/>
    <property type="evidence" value="ECO:0007669"/>
    <property type="project" value="UniProtKB-SubCell"/>
</dbReference>
<dbReference type="GO" id="GO:0005524">
    <property type="term" value="F:ATP binding"/>
    <property type="evidence" value="ECO:0007669"/>
    <property type="project" value="UniProtKB-UniRule"/>
</dbReference>
<dbReference type="GO" id="GO:0032267">
    <property type="term" value="F:tRNA(Ile)-lysidine synthase activity"/>
    <property type="evidence" value="ECO:0007669"/>
    <property type="project" value="UniProtKB-EC"/>
</dbReference>
<dbReference type="GO" id="GO:0006400">
    <property type="term" value="P:tRNA modification"/>
    <property type="evidence" value="ECO:0007669"/>
    <property type="project" value="UniProtKB-UniRule"/>
</dbReference>
<dbReference type="CDD" id="cd01992">
    <property type="entry name" value="TilS_N"/>
    <property type="match status" value="1"/>
</dbReference>
<dbReference type="Gene3D" id="1.20.59.20">
    <property type="match status" value="1"/>
</dbReference>
<dbReference type="Gene3D" id="3.40.50.620">
    <property type="entry name" value="HUPs"/>
    <property type="match status" value="1"/>
</dbReference>
<dbReference type="HAMAP" id="MF_01161">
    <property type="entry name" value="tRNA_Ile_lys_synt"/>
    <property type="match status" value="1"/>
</dbReference>
<dbReference type="InterPro" id="IPR012796">
    <property type="entry name" value="Lysidine-tRNA-synth_C"/>
</dbReference>
<dbReference type="InterPro" id="IPR014729">
    <property type="entry name" value="Rossmann-like_a/b/a_fold"/>
</dbReference>
<dbReference type="InterPro" id="IPR011063">
    <property type="entry name" value="TilS/TtcA_N"/>
</dbReference>
<dbReference type="InterPro" id="IPR012094">
    <property type="entry name" value="tRNA_Ile_lys_synt"/>
</dbReference>
<dbReference type="InterPro" id="IPR012795">
    <property type="entry name" value="tRNA_Ile_lys_synt_N"/>
</dbReference>
<dbReference type="InterPro" id="IPR015262">
    <property type="entry name" value="tRNA_Ile_lys_synt_subst-bd"/>
</dbReference>
<dbReference type="NCBIfam" id="TIGR02433">
    <property type="entry name" value="lysidine_TilS_C"/>
    <property type="match status" value="1"/>
</dbReference>
<dbReference type="NCBIfam" id="TIGR02432">
    <property type="entry name" value="lysidine_TilS_N"/>
    <property type="match status" value="1"/>
</dbReference>
<dbReference type="PANTHER" id="PTHR43033">
    <property type="entry name" value="TRNA(ILE)-LYSIDINE SYNTHASE-RELATED"/>
    <property type="match status" value="1"/>
</dbReference>
<dbReference type="PANTHER" id="PTHR43033:SF1">
    <property type="entry name" value="TRNA(ILE)-LYSIDINE SYNTHASE-RELATED"/>
    <property type="match status" value="1"/>
</dbReference>
<dbReference type="Pfam" id="PF01171">
    <property type="entry name" value="ATP_bind_3"/>
    <property type="match status" value="1"/>
</dbReference>
<dbReference type="Pfam" id="PF09179">
    <property type="entry name" value="TilS"/>
    <property type="match status" value="1"/>
</dbReference>
<dbReference type="Pfam" id="PF11734">
    <property type="entry name" value="TilS_C"/>
    <property type="match status" value="1"/>
</dbReference>
<dbReference type="SMART" id="SM00977">
    <property type="entry name" value="TilS_C"/>
    <property type="match status" value="1"/>
</dbReference>
<dbReference type="SUPFAM" id="SSF52402">
    <property type="entry name" value="Adenine nucleotide alpha hydrolases-like"/>
    <property type="match status" value="1"/>
</dbReference>
<dbReference type="SUPFAM" id="SSF82829">
    <property type="entry name" value="MesJ substrate recognition domain-like"/>
    <property type="match status" value="1"/>
</dbReference>
<dbReference type="SUPFAM" id="SSF56037">
    <property type="entry name" value="PheT/TilS domain"/>
    <property type="match status" value="1"/>
</dbReference>
<proteinExistence type="inferred from homology"/>
<gene>
    <name evidence="1" type="primary">tilS</name>
    <name type="ordered locus">BPEN_296</name>
</gene>
<name>TILS_BLOPB</name>
<reference key="1">
    <citation type="journal article" date="2005" name="Genome Res.">
        <title>Genome sequence of Blochmannia pennsylvanicus indicates parallel evolutionary trends among bacterial mutualists of insects.</title>
        <authorList>
            <person name="Degnan P.H."/>
            <person name="Lazarus A.B."/>
            <person name="Wernegreen J.J."/>
        </authorList>
    </citation>
    <scope>NUCLEOTIDE SEQUENCE [LARGE SCALE GENOMIC DNA]</scope>
    <source>
        <strain>BPEN</strain>
    </source>
</reference>
<accession>Q493B5</accession>
<comment type="function">
    <text evidence="1">Ligates lysine onto the cytidine present at position 34 of the AUA codon-specific tRNA(Ile) that contains the anticodon CAU, in an ATP-dependent manner. Cytidine is converted to lysidine, thus changing the amino acid specificity of the tRNA from methionine to isoleucine.</text>
</comment>
<comment type="catalytic activity">
    <reaction evidence="1">
        <text>cytidine(34) in tRNA(Ile2) + L-lysine + ATP = lysidine(34) in tRNA(Ile2) + AMP + diphosphate + H(+)</text>
        <dbReference type="Rhea" id="RHEA:43744"/>
        <dbReference type="Rhea" id="RHEA-COMP:10625"/>
        <dbReference type="Rhea" id="RHEA-COMP:10670"/>
        <dbReference type="ChEBI" id="CHEBI:15378"/>
        <dbReference type="ChEBI" id="CHEBI:30616"/>
        <dbReference type="ChEBI" id="CHEBI:32551"/>
        <dbReference type="ChEBI" id="CHEBI:33019"/>
        <dbReference type="ChEBI" id="CHEBI:82748"/>
        <dbReference type="ChEBI" id="CHEBI:83665"/>
        <dbReference type="ChEBI" id="CHEBI:456215"/>
        <dbReference type="EC" id="6.3.4.19"/>
    </reaction>
</comment>
<comment type="subcellular location">
    <subcellularLocation>
        <location evidence="1">Cytoplasm</location>
    </subcellularLocation>
</comment>
<comment type="domain">
    <text>The N-terminal region contains the highly conserved SGGXDS motif, predicted to be a P-loop motif involved in ATP binding.</text>
</comment>
<comment type="similarity">
    <text evidence="1">Belongs to the tRNA(Ile)-lysidine synthase family.</text>
</comment>
<sequence length="510" mass="60034">MITTNTSSENWDLYRKVTHCLVGHTRLVLSYSGGLDSTVLLDILTRLKNNSDHFTSSPFMLRAIYVHHGISNYSDEWASHCFNQCKIRGIPFSVIHINCYNAENKQRNIEALARNLRYKKLYNRLNSKEILLTAHHMNDQVESLFLALKRGSGPSGLSGMSKNALYANKYRLLRPLLDCSREQLEMYAYKKKLVWIEDDTNTDTRFDRNFLRIKILPSIYQRWPCFNQVVARTAQLCRDQENLLNELLSESFQKLIDESDGSLLFIPLFQYSIPKRQALLRRWLLHFSMKMPSYQLINRIWKEVVLSRKDATPILQLDKYLCRRFREKLYILPVNMRCSLNRIELSWNIIHNVFILPYNLGKLIYQPLSINEHVPKNPFDLHLNINSSLNTSHDVFEKYKKVLTHCFVRSPKSDEKISIIFGNIDGLLYILGRNHGRHLKKIWQELGVPPWLRSRIPLLFYNKTLITAIGVFITHNGKIISKENTLWKISWLQDIISYKIFKNSVRYHLE</sequence>
<feature type="chain" id="PRO_1000065602" description="tRNA(Ile)-lysidine synthase">
    <location>
        <begin position="1"/>
        <end position="510"/>
    </location>
</feature>
<feature type="binding site" evidence="1">
    <location>
        <begin position="32"/>
        <end position="37"/>
    </location>
    <ligand>
        <name>ATP</name>
        <dbReference type="ChEBI" id="CHEBI:30616"/>
    </ligand>
</feature>
<evidence type="ECO:0000255" key="1">
    <source>
        <dbReference type="HAMAP-Rule" id="MF_01161"/>
    </source>
</evidence>
<protein>
    <recommendedName>
        <fullName evidence="1">tRNA(Ile)-lysidine synthase</fullName>
        <ecNumber evidence="1">6.3.4.19</ecNumber>
    </recommendedName>
    <alternativeName>
        <fullName evidence="1">tRNA(Ile)-2-lysyl-cytidine synthase</fullName>
    </alternativeName>
    <alternativeName>
        <fullName evidence="1">tRNA(Ile)-lysidine synthetase</fullName>
    </alternativeName>
</protein>